<dbReference type="EC" id="3.1.3.16"/>
<dbReference type="EMBL" id="AL662987">
    <property type="protein sequence ID" value="CAD41383.2"/>
    <property type="molecule type" value="Genomic_DNA"/>
</dbReference>
<dbReference type="EMBL" id="AP014960">
    <property type="status" value="NOT_ANNOTATED_CDS"/>
    <property type="molecule type" value="Genomic_DNA"/>
</dbReference>
<dbReference type="EMBL" id="CM000141">
    <property type="protein sequence ID" value="EAZ31769.1"/>
    <property type="molecule type" value="Genomic_DNA"/>
</dbReference>
<dbReference type="RefSeq" id="XP_015634052.1">
    <property type="nucleotide sequence ID" value="XM_015778566.1"/>
</dbReference>
<dbReference type="SMR" id="Q7XUC5"/>
<dbReference type="FunCoup" id="Q7XUC5">
    <property type="interactions" value="2049"/>
</dbReference>
<dbReference type="STRING" id="39947.Q7XUC5"/>
<dbReference type="PaxDb" id="39947-Q7XUC5"/>
<dbReference type="InParanoid" id="Q7XUC5"/>
<dbReference type="OrthoDB" id="420076at2759"/>
<dbReference type="Proteomes" id="UP000000763">
    <property type="component" value="Chromosome 4"/>
</dbReference>
<dbReference type="Proteomes" id="UP000007752">
    <property type="component" value="Chromosome 4"/>
</dbReference>
<dbReference type="Proteomes" id="UP000059680">
    <property type="component" value="Chromosome 4"/>
</dbReference>
<dbReference type="GO" id="GO:0046872">
    <property type="term" value="F:metal ion binding"/>
    <property type="evidence" value="ECO:0007669"/>
    <property type="project" value="UniProtKB-KW"/>
</dbReference>
<dbReference type="GO" id="GO:0004722">
    <property type="term" value="F:protein serine/threonine phosphatase activity"/>
    <property type="evidence" value="ECO:0000318"/>
    <property type="project" value="GO_Central"/>
</dbReference>
<dbReference type="GO" id="GO:1902531">
    <property type="term" value="P:regulation of intracellular signal transduction"/>
    <property type="evidence" value="ECO:0000318"/>
    <property type="project" value="GO_Central"/>
</dbReference>
<dbReference type="CDD" id="cd00143">
    <property type="entry name" value="PP2Cc"/>
    <property type="match status" value="1"/>
</dbReference>
<dbReference type="FunFam" id="3.60.40.10:FF:000020">
    <property type="entry name" value="Probable protein phosphatase 2C 42"/>
    <property type="match status" value="1"/>
</dbReference>
<dbReference type="Gene3D" id="3.60.40.10">
    <property type="entry name" value="PPM-type phosphatase domain"/>
    <property type="match status" value="1"/>
</dbReference>
<dbReference type="InterPro" id="IPR015655">
    <property type="entry name" value="PP2C"/>
</dbReference>
<dbReference type="InterPro" id="IPR000222">
    <property type="entry name" value="PP2C_BS"/>
</dbReference>
<dbReference type="InterPro" id="IPR036457">
    <property type="entry name" value="PPM-type-like_dom_sf"/>
</dbReference>
<dbReference type="InterPro" id="IPR001932">
    <property type="entry name" value="PPM-type_phosphatase-like_dom"/>
</dbReference>
<dbReference type="PANTHER" id="PTHR47992">
    <property type="entry name" value="PROTEIN PHOSPHATASE"/>
    <property type="match status" value="1"/>
</dbReference>
<dbReference type="Pfam" id="PF00481">
    <property type="entry name" value="PP2C"/>
    <property type="match status" value="1"/>
</dbReference>
<dbReference type="SMART" id="SM00332">
    <property type="entry name" value="PP2Cc"/>
    <property type="match status" value="1"/>
</dbReference>
<dbReference type="SUPFAM" id="SSF81606">
    <property type="entry name" value="PP2C-like"/>
    <property type="match status" value="1"/>
</dbReference>
<dbReference type="PROSITE" id="PS01032">
    <property type="entry name" value="PPM_1"/>
    <property type="match status" value="1"/>
</dbReference>
<dbReference type="PROSITE" id="PS51746">
    <property type="entry name" value="PPM_2"/>
    <property type="match status" value="1"/>
</dbReference>
<gene>
    <name type="ordered locus">Os04g0584300</name>
    <name type="ordered locus">Os04g0584366</name>
    <name type="ordered locus">LOC_Os04g49490</name>
    <name type="ORF">OsJ_015252</name>
    <name type="ORF">OSJNBa0088A01.23</name>
</gene>
<reference key="1">
    <citation type="journal article" date="2002" name="Nature">
        <title>Sequence and analysis of rice chromosome 4.</title>
        <authorList>
            <person name="Feng Q."/>
            <person name="Zhang Y."/>
            <person name="Hao P."/>
            <person name="Wang S."/>
            <person name="Fu G."/>
            <person name="Huang Y."/>
            <person name="Li Y."/>
            <person name="Zhu J."/>
            <person name="Liu Y."/>
            <person name="Hu X."/>
            <person name="Jia P."/>
            <person name="Zhang Y."/>
            <person name="Zhao Q."/>
            <person name="Ying K."/>
            <person name="Yu S."/>
            <person name="Tang Y."/>
            <person name="Weng Q."/>
            <person name="Zhang L."/>
            <person name="Lu Y."/>
            <person name="Mu J."/>
            <person name="Lu Y."/>
            <person name="Zhang L.S."/>
            <person name="Yu Z."/>
            <person name="Fan D."/>
            <person name="Liu X."/>
            <person name="Lu T."/>
            <person name="Li C."/>
            <person name="Wu Y."/>
            <person name="Sun T."/>
            <person name="Lei H."/>
            <person name="Li T."/>
            <person name="Hu H."/>
            <person name="Guan J."/>
            <person name="Wu M."/>
            <person name="Zhang R."/>
            <person name="Zhou B."/>
            <person name="Chen Z."/>
            <person name="Chen L."/>
            <person name="Jin Z."/>
            <person name="Wang R."/>
            <person name="Yin H."/>
            <person name="Cai Z."/>
            <person name="Ren S."/>
            <person name="Lv G."/>
            <person name="Gu W."/>
            <person name="Zhu G."/>
            <person name="Tu Y."/>
            <person name="Jia J."/>
            <person name="Zhang Y."/>
            <person name="Chen J."/>
            <person name="Kang H."/>
            <person name="Chen X."/>
            <person name="Shao C."/>
            <person name="Sun Y."/>
            <person name="Hu Q."/>
            <person name="Zhang X."/>
            <person name="Zhang W."/>
            <person name="Wang L."/>
            <person name="Ding C."/>
            <person name="Sheng H."/>
            <person name="Gu J."/>
            <person name="Chen S."/>
            <person name="Ni L."/>
            <person name="Zhu F."/>
            <person name="Chen W."/>
            <person name="Lan L."/>
            <person name="Lai Y."/>
            <person name="Cheng Z."/>
            <person name="Gu M."/>
            <person name="Jiang J."/>
            <person name="Li J."/>
            <person name="Hong G."/>
            <person name="Xue Y."/>
            <person name="Han B."/>
        </authorList>
    </citation>
    <scope>NUCLEOTIDE SEQUENCE [LARGE SCALE GENOMIC DNA]</scope>
    <source>
        <strain>cv. Nipponbare</strain>
    </source>
</reference>
<reference key="2">
    <citation type="journal article" date="2005" name="Nature">
        <title>The map-based sequence of the rice genome.</title>
        <authorList>
            <consortium name="International rice genome sequencing project (IRGSP)"/>
        </authorList>
    </citation>
    <scope>NUCLEOTIDE SEQUENCE [LARGE SCALE GENOMIC DNA]</scope>
    <source>
        <strain>cv. Nipponbare</strain>
    </source>
</reference>
<reference key="3">
    <citation type="journal article" date="2013" name="Rice">
        <title>Improvement of the Oryza sativa Nipponbare reference genome using next generation sequence and optical map data.</title>
        <authorList>
            <person name="Kawahara Y."/>
            <person name="de la Bastide M."/>
            <person name="Hamilton J.P."/>
            <person name="Kanamori H."/>
            <person name="McCombie W.R."/>
            <person name="Ouyang S."/>
            <person name="Schwartz D.C."/>
            <person name="Tanaka T."/>
            <person name="Wu J."/>
            <person name="Zhou S."/>
            <person name="Childs K.L."/>
            <person name="Davidson R.M."/>
            <person name="Lin H."/>
            <person name="Quesada-Ocampo L."/>
            <person name="Vaillancourt B."/>
            <person name="Sakai H."/>
            <person name="Lee S.S."/>
            <person name="Kim J."/>
            <person name="Numa H."/>
            <person name="Itoh T."/>
            <person name="Buell C.R."/>
            <person name="Matsumoto T."/>
        </authorList>
    </citation>
    <scope>GENOME REANNOTATION</scope>
    <source>
        <strain>cv. Nipponbare</strain>
    </source>
</reference>
<reference key="4">
    <citation type="journal article" date="2005" name="PLoS Biol.">
        <title>The genomes of Oryza sativa: a history of duplications.</title>
        <authorList>
            <person name="Yu J."/>
            <person name="Wang J."/>
            <person name="Lin W."/>
            <person name="Li S."/>
            <person name="Li H."/>
            <person name="Zhou J."/>
            <person name="Ni P."/>
            <person name="Dong W."/>
            <person name="Hu S."/>
            <person name="Zeng C."/>
            <person name="Zhang J."/>
            <person name="Zhang Y."/>
            <person name="Li R."/>
            <person name="Xu Z."/>
            <person name="Li S."/>
            <person name="Li X."/>
            <person name="Zheng H."/>
            <person name="Cong L."/>
            <person name="Lin L."/>
            <person name="Yin J."/>
            <person name="Geng J."/>
            <person name="Li G."/>
            <person name="Shi J."/>
            <person name="Liu J."/>
            <person name="Lv H."/>
            <person name="Li J."/>
            <person name="Wang J."/>
            <person name="Deng Y."/>
            <person name="Ran L."/>
            <person name="Shi X."/>
            <person name="Wang X."/>
            <person name="Wu Q."/>
            <person name="Li C."/>
            <person name="Ren X."/>
            <person name="Wang J."/>
            <person name="Wang X."/>
            <person name="Li D."/>
            <person name="Liu D."/>
            <person name="Zhang X."/>
            <person name="Ji Z."/>
            <person name="Zhao W."/>
            <person name="Sun Y."/>
            <person name="Zhang Z."/>
            <person name="Bao J."/>
            <person name="Han Y."/>
            <person name="Dong L."/>
            <person name="Ji J."/>
            <person name="Chen P."/>
            <person name="Wu S."/>
            <person name="Liu J."/>
            <person name="Xiao Y."/>
            <person name="Bu D."/>
            <person name="Tan J."/>
            <person name="Yang L."/>
            <person name="Ye C."/>
            <person name="Zhang J."/>
            <person name="Xu J."/>
            <person name="Zhou Y."/>
            <person name="Yu Y."/>
            <person name="Zhang B."/>
            <person name="Zhuang S."/>
            <person name="Wei H."/>
            <person name="Liu B."/>
            <person name="Lei M."/>
            <person name="Yu H."/>
            <person name="Li Y."/>
            <person name="Xu H."/>
            <person name="Wei S."/>
            <person name="He X."/>
            <person name="Fang L."/>
            <person name="Zhang Z."/>
            <person name="Zhang Y."/>
            <person name="Huang X."/>
            <person name="Su Z."/>
            <person name="Tong W."/>
            <person name="Li J."/>
            <person name="Tong Z."/>
            <person name="Li S."/>
            <person name="Ye J."/>
            <person name="Wang L."/>
            <person name="Fang L."/>
            <person name="Lei T."/>
            <person name="Chen C.-S."/>
            <person name="Chen H.-C."/>
            <person name="Xu Z."/>
            <person name="Li H."/>
            <person name="Huang H."/>
            <person name="Zhang F."/>
            <person name="Xu H."/>
            <person name="Li N."/>
            <person name="Zhao C."/>
            <person name="Li S."/>
            <person name="Dong L."/>
            <person name="Huang Y."/>
            <person name="Li L."/>
            <person name="Xi Y."/>
            <person name="Qi Q."/>
            <person name="Li W."/>
            <person name="Zhang B."/>
            <person name="Hu W."/>
            <person name="Zhang Y."/>
            <person name="Tian X."/>
            <person name="Jiao Y."/>
            <person name="Liang X."/>
            <person name="Jin J."/>
            <person name="Gao L."/>
            <person name="Zheng W."/>
            <person name="Hao B."/>
            <person name="Liu S.-M."/>
            <person name="Wang W."/>
            <person name="Yuan L."/>
            <person name="Cao M."/>
            <person name="McDermott J."/>
            <person name="Samudrala R."/>
            <person name="Wang J."/>
            <person name="Wong G.K.-S."/>
            <person name="Yang H."/>
        </authorList>
    </citation>
    <scope>NUCLEOTIDE SEQUENCE [LARGE SCALE GENOMIC DNA]</scope>
    <source>
        <strain>cv. Nipponbare</strain>
    </source>
</reference>
<reference key="5">
    <citation type="journal article" date="2008" name="BMC Genomics">
        <title>Genome-wide and expression analysis of protein phosphatase 2C in rice and Arabidopsis.</title>
        <authorList>
            <person name="Xue T."/>
            <person name="Wang D."/>
            <person name="Zhang S."/>
            <person name="Ehlting J."/>
            <person name="Ni F."/>
            <person name="Jacab S."/>
            <person name="Zheng C."/>
            <person name="Zhong Y."/>
        </authorList>
    </citation>
    <scope>GENE FAMILY</scope>
    <scope>NOMENCLATURE</scope>
</reference>
<keyword id="KW-0378">Hydrolase</keyword>
<keyword id="KW-0460">Magnesium</keyword>
<keyword id="KW-0464">Manganese</keyword>
<keyword id="KW-0479">Metal-binding</keyword>
<keyword id="KW-0904">Protein phosphatase</keyword>
<keyword id="KW-1185">Reference proteome</keyword>
<sequence>MWPWLERIASACWDRVRRYALTRRDEEDGSGSGGDADDLLLWSRDLVRHAAGEFSFAVVQANDVLEDHSQVETGAAATFIGVYDGHGGAEASRFISNHLAAHLVRLAQERGTISEDIVRNAFSATEEGFLSLVRRTHLIKPSIASIGSCCLVGIIWKGTLYLANLGDSRAVVGCLTGSNKIVAEQLTRDHNASMEEVRQELRSLHPDDSQIVVLKNGVWRIKGIIQVSRSIGDAYLKKQEFALDPSMTRFHLSEPLRRPVLTSEPSIYTRVLHSQDSFFIFASDGLWEHLTNQQAVEIVHNNPREGIARRLVKAALKEAARKREMKYNDIKKLEKGVRRFFHDDITVVVVFIDHELLQDGDESTPEISVRGFVDSGGPSSFSGLNGIS</sequence>
<proteinExistence type="inferred from homology"/>
<accession>Q7XUC5</accession>
<accession>Q0JAQ5</accession>
<feature type="chain" id="PRO_0000363290" description="Probable protein phosphatase 2C 43">
    <location>
        <begin position="1"/>
        <end position="388"/>
    </location>
</feature>
<feature type="domain" description="PPM-type phosphatase" evidence="2">
    <location>
        <begin position="53"/>
        <end position="352"/>
    </location>
</feature>
<feature type="binding site" evidence="1">
    <location>
        <position position="84"/>
    </location>
    <ligand>
        <name>Mn(2+)</name>
        <dbReference type="ChEBI" id="CHEBI:29035"/>
        <label>1</label>
    </ligand>
</feature>
<feature type="binding site" evidence="1">
    <location>
        <position position="84"/>
    </location>
    <ligand>
        <name>Mn(2+)</name>
        <dbReference type="ChEBI" id="CHEBI:29035"/>
        <label>2</label>
    </ligand>
</feature>
<feature type="binding site" evidence="1">
    <location>
        <position position="85"/>
    </location>
    <ligand>
        <name>Mn(2+)</name>
        <dbReference type="ChEBI" id="CHEBI:29035"/>
        <label>1</label>
    </ligand>
</feature>
<feature type="binding site" evidence="1">
    <location>
        <position position="284"/>
    </location>
    <ligand>
        <name>Mn(2+)</name>
        <dbReference type="ChEBI" id="CHEBI:29035"/>
        <label>2</label>
    </ligand>
</feature>
<feature type="binding site" evidence="1">
    <location>
        <position position="343"/>
    </location>
    <ligand>
        <name>Mn(2+)</name>
        <dbReference type="ChEBI" id="CHEBI:29035"/>
        <label>2</label>
    </ligand>
</feature>
<organism>
    <name type="scientific">Oryza sativa subsp. japonica</name>
    <name type="common">Rice</name>
    <dbReference type="NCBI Taxonomy" id="39947"/>
    <lineage>
        <taxon>Eukaryota</taxon>
        <taxon>Viridiplantae</taxon>
        <taxon>Streptophyta</taxon>
        <taxon>Embryophyta</taxon>
        <taxon>Tracheophyta</taxon>
        <taxon>Spermatophyta</taxon>
        <taxon>Magnoliopsida</taxon>
        <taxon>Liliopsida</taxon>
        <taxon>Poales</taxon>
        <taxon>Poaceae</taxon>
        <taxon>BOP clade</taxon>
        <taxon>Oryzoideae</taxon>
        <taxon>Oryzeae</taxon>
        <taxon>Oryzinae</taxon>
        <taxon>Oryza</taxon>
        <taxon>Oryza sativa</taxon>
    </lineage>
</organism>
<comment type="catalytic activity">
    <reaction>
        <text>O-phospho-L-seryl-[protein] + H2O = L-seryl-[protein] + phosphate</text>
        <dbReference type="Rhea" id="RHEA:20629"/>
        <dbReference type="Rhea" id="RHEA-COMP:9863"/>
        <dbReference type="Rhea" id="RHEA-COMP:11604"/>
        <dbReference type="ChEBI" id="CHEBI:15377"/>
        <dbReference type="ChEBI" id="CHEBI:29999"/>
        <dbReference type="ChEBI" id="CHEBI:43474"/>
        <dbReference type="ChEBI" id="CHEBI:83421"/>
        <dbReference type="EC" id="3.1.3.16"/>
    </reaction>
</comment>
<comment type="catalytic activity">
    <reaction>
        <text>O-phospho-L-threonyl-[protein] + H2O = L-threonyl-[protein] + phosphate</text>
        <dbReference type="Rhea" id="RHEA:47004"/>
        <dbReference type="Rhea" id="RHEA-COMP:11060"/>
        <dbReference type="Rhea" id="RHEA-COMP:11605"/>
        <dbReference type="ChEBI" id="CHEBI:15377"/>
        <dbReference type="ChEBI" id="CHEBI:30013"/>
        <dbReference type="ChEBI" id="CHEBI:43474"/>
        <dbReference type="ChEBI" id="CHEBI:61977"/>
        <dbReference type="EC" id="3.1.3.16"/>
    </reaction>
</comment>
<comment type="cofactor">
    <cofactor evidence="1">
        <name>Mg(2+)</name>
        <dbReference type="ChEBI" id="CHEBI:18420"/>
    </cofactor>
    <cofactor evidence="1">
        <name>Mn(2+)</name>
        <dbReference type="ChEBI" id="CHEBI:29035"/>
    </cofactor>
    <text evidence="1">Binds 2 magnesium or manganese ions per subunit.</text>
</comment>
<comment type="similarity">
    <text evidence="3">Belongs to the PP2C family.</text>
</comment>
<protein>
    <recommendedName>
        <fullName>Probable protein phosphatase 2C 43</fullName>
        <shortName>OsPP2C43</shortName>
        <ecNumber>3.1.3.16</ecNumber>
    </recommendedName>
</protein>
<name>P2C43_ORYSJ</name>
<evidence type="ECO:0000250" key="1"/>
<evidence type="ECO:0000255" key="2">
    <source>
        <dbReference type="PROSITE-ProRule" id="PRU01082"/>
    </source>
</evidence>
<evidence type="ECO:0000305" key="3"/>